<protein>
    <recommendedName>
        <fullName>Uncharacterized protein AF_0304</fullName>
    </recommendedName>
</protein>
<sequence>MIVSSEAFLNLNINEILKFRKFLNIRVSKIVCYLRRQDLWLESGYKQAVKSPFNRSTEKFKIKYFDYYSKLSNWKQAFPEAEIIVRIYDRKLFPEGNVILDFLQALGIDMPEAREYKIEANPSLSHLSTLVMRRINEELNLSPQDRWKVVNYLLELDRREGSILKTFFTLEERIKFLEQFRESNEKLFREYFGTKNQFVLSEEEIEFYRQQDQIPREVIERAIEERYQKVLEFMKREGIMAKEKIFPKVNVNYLPEANLEFFRIDVLQANLLNGRLILSGLLLPKNAEGVKLTVKDAEGIKEIQWGLPSPIFGELHPDNPIAKNARFRVDNVVPDLEKPIEVFLNGEKVAEIIIDGSRG</sequence>
<keyword id="KW-1185">Reference proteome</keyword>
<organism>
    <name type="scientific">Archaeoglobus fulgidus (strain ATCC 49558 / DSM 4304 / JCM 9628 / NBRC 100126 / VC-16)</name>
    <dbReference type="NCBI Taxonomy" id="224325"/>
    <lineage>
        <taxon>Archaea</taxon>
        <taxon>Methanobacteriati</taxon>
        <taxon>Methanobacteriota</taxon>
        <taxon>Archaeoglobi</taxon>
        <taxon>Archaeoglobales</taxon>
        <taxon>Archaeoglobaceae</taxon>
        <taxon>Archaeoglobus</taxon>
    </lineage>
</organism>
<reference key="1">
    <citation type="journal article" date="1997" name="Nature">
        <title>The complete genome sequence of the hyperthermophilic, sulphate-reducing archaeon Archaeoglobus fulgidus.</title>
        <authorList>
            <person name="Klenk H.-P."/>
            <person name="Clayton R.A."/>
            <person name="Tomb J.-F."/>
            <person name="White O."/>
            <person name="Nelson K.E."/>
            <person name="Ketchum K.A."/>
            <person name="Dodson R.J."/>
            <person name="Gwinn M.L."/>
            <person name="Hickey E.K."/>
            <person name="Peterson J.D."/>
            <person name="Richardson D.L."/>
            <person name="Kerlavage A.R."/>
            <person name="Graham D.E."/>
            <person name="Kyrpides N.C."/>
            <person name="Fleischmann R.D."/>
            <person name="Quackenbush J."/>
            <person name="Lee N.H."/>
            <person name="Sutton G.G."/>
            <person name="Gill S.R."/>
            <person name="Kirkness E.F."/>
            <person name="Dougherty B.A."/>
            <person name="McKenney K."/>
            <person name="Adams M.D."/>
            <person name="Loftus B.J."/>
            <person name="Peterson S.N."/>
            <person name="Reich C.I."/>
            <person name="McNeil L.K."/>
            <person name="Badger J.H."/>
            <person name="Glodek A."/>
            <person name="Zhou L."/>
            <person name="Overbeek R."/>
            <person name="Gocayne J.D."/>
            <person name="Weidman J.F."/>
            <person name="McDonald L.A."/>
            <person name="Utterback T.R."/>
            <person name="Cotton M.D."/>
            <person name="Spriggs T."/>
            <person name="Artiach P."/>
            <person name="Kaine B.P."/>
            <person name="Sykes S.M."/>
            <person name="Sadow P.W."/>
            <person name="D'Andrea K.P."/>
            <person name="Bowman C."/>
            <person name="Fujii C."/>
            <person name="Garland S.A."/>
            <person name="Mason T.M."/>
            <person name="Olsen G.J."/>
            <person name="Fraser C.M."/>
            <person name="Smith H.O."/>
            <person name="Woese C.R."/>
            <person name="Venter J.C."/>
        </authorList>
    </citation>
    <scope>NUCLEOTIDE SEQUENCE [LARGE SCALE GENOMIC DNA]</scope>
    <source>
        <strain>ATCC 49558 / DSM 4304 / JCM 9628 / NBRC 100126 / VC-16</strain>
    </source>
</reference>
<gene>
    <name type="ordered locus">AF_0304</name>
</gene>
<feature type="chain" id="PRO_0000127864" description="Uncharacterized protein AF_0304">
    <location>
        <begin position="1"/>
        <end position="359"/>
    </location>
</feature>
<dbReference type="EMBL" id="AE000782">
    <property type="protein sequence ID" value="AAB90935.1"/>
    <property type="molecule type" value="Genomic_DNA"/>
</dbReference>
<dbReference type="PIR" id="H69287">
    <property type="entry name" value="H69287"/>
</dbReference>
<dbReference type="STRING" id="224325.AF_0304"/>
<dbReference type="PaxDb" id="224325-AF_0304"/>
<dbReference type="EnsemblBacteria" id="AAB90935">
    <property type="protein sequence ID" value="AAB90935"/>
    <property type="gene ID" value="AF_0304"/>
</dbReference>
<dbReference type="KEGG" id="afu:AF_0304"/>
<dbReference type="HOGENOM" id="CLU_759918_0_0_2"/>
<dbReference type="Proteomes" id="UP000002199">
    <property type="component" value="Chromosome"/>
</dbReference>
<proteinExistence type="predicted"/>
<name>Y304_ARCFU</name>
<accession>O29938</accession>